<gene>
    <name evidence="1" type="primary">murI</name>
    <name type="ordered locus">gll1496</name>
</gene>
<evidence type="ECO:0000255" key="1">
    <source>
        <dbReference type="HAMAP-Rule" id="MF_00258"/>
    </source>
</evidence>
<protein>
    <recommendedName>
        <fullName evidence="1">Glutamate racemase</fullName>
        <ecNumber evidence="1">5.1.1.3</ecNumber>
    </recommendedName>
</protein>
<name>MURI_GLOVI</name>
<reference key="1">
    <citation type="journal article" date="2003" name="DNA Res.">
        <title>Complete genome structure of Gloeobacter violaceus PCC 7421, a cyanobacterium that lacks thylakoids.</title>
        <authorList>
            <person name="Nakamura Y."/>
            <person name="Kaneko T."/>
            <person name="Sato S."/>
            <person name="Mimuro M."/>
            <person name="Miyashita H."/>
            <person name="Tsuchiya T."/>
            <person name="Sasamoto S."/>
            <person name="Watanabe A."/>
            <person name="Kawashima K."/>
            <person name="Kishida Y."/>
            <person name="Kiyokawa C."/>
            <person name="Kohara M."/>
            <person name="Matsumoto M."/>
            <person name="Matsuno A."/>
            <person name="Nakazaki N."/>
            <person name="Shimpo S."/>
            <person name="Takeuchi C."/>
            <person name="Yamada M."/>
            <person name="Tabata S."/>
        </authorList>
    </citation>
    <scope>NUCLEOTIDE SEQUENCE [LARGE SCALE GENOMIC DNA]</scope>
    <source>
        <strain>ATCC 29082 / PCC 7421</strain>
    </source>
</reference>
<accession>Q7NKI2</accession>
<feature type="chain" id="PRO_1000059068" description="Glutamate racemase">
    <location>
        <begin position="1"/>
        <end position="265"/>
    </location>
</feature>
<feature type="active site" description="Proton donor/acceptor" evidence="1">
    <location>
        <position position="70"/>
    </location>
</feature>
<feature type="active site" description="Proton donor/acceptor" evidence="1">
    <location>
        <position position="179"/>
    </location>
</feature>
<feature type="binding site" evidence="1">
    <location>
        <begin position="7"/>
        <end position="8"/>
    </location>
    <ligand>
        <name>substrate</name>
    </ligand>
</feature>
<feature type="binding site" evidence="1">
    <location>
        <begin position="39"/>
        <end position="40"/>
    </location>
    <ligand>
        <name>substrate</name>
    </ligand>
</feature>
<feature type="binding site" evidence="1">
    <location>
        <begin position="71"/>
        <end position="72"/>
    </location>
    <ligand>
        <name>substrate</name>
    </ligand>
</feature>
<feature type="binding site" evidence="1">
    <location>
        <begin position="180"/>
        <end position="181"/>
    </location>
    <ligand>
        <name>substrate</name>
    </ligand>
</feature>
<proteinExistence type="inferred from homology"/>
<keyword id="KW-0133">Cell shape</keyword>
<keyword id="KW-0961">Cell wall biogenesis/degradation</keyword>
<keyword id="KW-0413">Isomerase</keyword>
<keyword id="KW-0573">Peptidoglycan synthesis</keyword>
<keyword id="KW-1185">Reference proteome</keyword>
<sequence>MVLGLFDSGLGGLTVLREIARRLPAQPVIYFADTARLPYGSRTPAEICRYVREILHWFEQQGVQRVLMACNTSSALALPVVASEYALKVGGLIAPAARAAARRGRRIGVIATAATVQSHAYTRAIQALTPRAQVWEVACPEFVPLVEGGRLLGEEVRSVARRYLAPLVEQRIDTLVYGCTHYPYLAPVIGDLLPASVRCVDPAVAAVAELAAALPPSRRLETRAACHFFVSGDPVRFAQAAYPWLDYYPQVQAVALPPLPAAQTN</sequence>
<comment type="function">
    <text evidence="1">Provides the (R)-glutamate required for cell wall biosynthesis.</text>
</comment>
<comment type="catalytic activity">
    <reaction evidence="1">
        <text>L-glutamate = D-glutamate</text>
        <dbReference type="Rhea" id="RHEA:12813"/>
        <dbReference type="ChEBI" id="CHEBI:29985"/>
        <dbReference type="ChEBI" id="CHEBI:29986"/>
        <dbReference type="EC" id="5.1.1.3"/>
    </reaction>
</comment>
<comment type="pathway">
    <text evidence="1">Cell wall biogenesis; peptidoglycan biosynthesis.</text>
</comment>
<comment type="similarity">
    <text evidence="1">Belongs to the aspartate/glutamate racemases family.</text>
</comment>
<dbReference type="EC" id="5.1.1.3" evidence="1"/>
<dbReference type="EMBL" id="BA000045">
    <property type="protein sequence ID" value="BAC89437.1"/>
    <property type="molecule type" value="Genomic_DNA"/>
</dbReference>
<dbReference type="RefSeq" id="NP_924442.1">
    <property type="nucleotide sequence ID" value="NC_005125.1"/>
</dbReference>
<dbReference type="RefSeq" id="WP_011141495.1">
    <property type="nucleotide sequence ID" value="NC_005125.1"/>
</dbReference>
<dbReference type="SMR" id="Q7NKI2"/>
<dbReference type="FunCoup" id="Q7NKI2">
    <property type="interactions" value="30"/>
</dbReference>
<dbReference type="STRING" id="251221.gene:10758985"/>
<dbReference type="EnsemblBacteria" id="BAC89437">
    <property type="protein sequence ID" value="BAC89437"/>
    <property type="gene ID" value="BAC89437"/>
</dbReference>
<dbReference type="KEGG" id="gvi:gll1496"/>
<dbReference type="PATRIC" id="fig|251221.4.peg.1530"/>
<dbReference type="eggNOG" id="COG0796">
    <property type="taxonomic scope" value="Bacteria"/>
</dbReference>
<dbReference type="HOGENOM" id="CLU_052344_0_2_3"/>
<dbReference type="InParanoid" id="Q7NKI2"/>
<dbReference type="OrthoDB" id="9801055at2"/>
<dbReference type="PhylomeDB" id="Q7NKI2"/>
<dbReference type="UniPathway" id="UPA00219"/>
<dbReference type="Proteomes" id="UP000000557">
    <property type="component" value="Chromosome"/>
</dbReference>
<dbReference type="GO" id="GO:0008881">
    <property type="term" value="F:glutamate racemase activity"/>
    <property type="evidence" value="ECO:0000318"/>
    <property type="project" value="GO_Central"/>
</dbReference>
<dbReference type="GO" id="GO:0071555">
    <property type="term" value="P:cell wall organization"/>
    <property type="evidence" value="ECO:0007669"/>
    <property type="project" value="UniProtKB-KW"/>
</dbReference>
<dbReference type="GO" id="GO:0009252">
    <property type="term" value="P:peptidoglycan biosynthetic process"/>
    <property type="evidence" value="ECO:0000318"/>
    <property type="project" value="GO_Central"/>
</dbReference>
<dbReference type="GO" id="GO:0008360">
    <property type="term" value="P:regulation of cell shape"/>
    <property type="evidence" value="ECO:0007669"/>
    <property type="project" value="UniProtKB-KW"/>
</dbReference>
<dbReference type="FunFam" id="3.40.50.1860:FF:000001">
    <property type="entry name" value="Glutamate racemase"/>
    <property type="match status" value="1"/>
</dbReference>
<dbReference type="Gene3D" id="3.40.50.1860">
    <property type="match status" value="2"/>
</dbReference>
<dbReference type="HAMAP" id="MF_00258">
    <property type="entry name" value="Glu_racemase"/>
    <property type="match status" value="1"/>
</dbReference>
<dbReference type="InterPro" id="IPR015942">
    <property type="entry name" value="Asp/Glu/hydantoin_racemase"/>
</dbReference>
<dbReference type="InterPro" id="IPR001920">
    <property type="entry name" value="Asp/Glu_race"/>
</dbReference>
<dbReference type="InterPro" id="IPR033134">
    <property type="entry name" value="Asp/Glu_racemase_AS_2"/>
</dbReference>
<dbReference type="InterPro" id="IPR004391">
    <property type="entry name" value="Glu_race"/>
</dbReference>
<dbReference type="NCBIfam" id="TIGR00067">
    <property type="entry name" value="glut_race"/>
    <property type="match status" value="1"/>
</dbReference>
<dbReference type="PANTHER" id="PTHR21198">
    <property type="entry name" value="GLUTAMATE RACEMASE"/>
    <property type="match status" value="1"/>
</dbReference>
<dbReference type="PANTHER" id="PTHR21198:SF2">
    <property type="entry name" value="GLUTAMATE RACEMASE"/>
    <property type="match status" value="1"/>
</dbReference>
<dbReference type="Pfam" id="PF01177">
    <property type="entry name" value="Asp_Glu_race"/>
    <property type="match status" value="1"/>
</dbReference>
<dbReference type="SUPFAM" id="SSF53681">
    <property type="entry name" value="Aspartate/glutamate racemase"/>
    <property type="match status" value="2"/>
</dbReference>
<dbReference type="PROSITE" id="PS00924">
    <property type="entry name" value="ASP_GLU_RACEMASE_2"/>
    <property type="match status" value="1"/>
</dbReference>
<organism>
    <name type="scientific">Gloeobacter violaceus (strain ATCC 29082 / PCC 7421)</name>
    <dbReference type="NCBI Taxonomy" id="251221"/>
    <lineage>
        <taxon>Bacteria</taxon>
        <taxon>Bacillati</taxon>
        <taxon>Cyanobacteriota</taxon>
        <taxon>Cyanophyceae</taxon>
        <taxon>Gloeobacterales</taxon>
        <taxon>Gloeobacteraceae</taxon>
        <taxon>Gloeobacter</taxon>
    </lineage>
</organism>